<protein>
    <recommendedName>
        <fullName evidence="1">Putative transport protein YidE</fullName>
    </recommendedName>
</protein>
<name>YIDE_ECOL6</name>
<feature type="chain" id="PRO_0000208798" description="Putative transport protein YidE">
    <location>
        <begin position="1"/>
        <end position="553"/>
    </location>
</feature>
<feature type="transmembrane region" description="Helical" evidence="1">
    <location>
        <begin position="4"/>
        <end position="24"/>
    </location>
</feature>
<feature type="transmembrane region" description="Helical" evidence="1">
    <location>
        <begin position="28"/>
        <end position="48"/>
    </location>
</feature>
<feature type="transmembrane region" description="Helical" evidence="1">
    <location>
        <begin position="65"/>
        <end position="85"/>
    </location>
</feature>
<feature type="transmembrane region" description="Helical" evidence="1">
    <location>
        <begin position="95"/>
        <end position="115"/>
    </location>
</feature>
<feature type="transmembrane region" description="Helical" evidence="1">
    <location>
        <begin position="158"/>
        <end position="178"/>
    </location>
</feature>
<feature type="transmembrane region" description="Helical" evidence="1">
    <location>
        <begin position="371"/>
        <end position="391"/>
    </location>
</feature>
<feature type="transmembrane region" description="Helical" evidence="1">
    <location>
        <begin position="393"/>
        <end position="413"/>
    </location>
</feature>
<feature type="transmembrane region" description="Helical" evidence="1">
    <location>
        <begin position="439"/>
        <end position="459"/>
    </location>
</feature>
<feature type="transmembrane region" description="Helical" evidence="1">
    <location>
        <begin position="464"/>
        <end position="484"/>
    </location>
</feature>
<feature type="transmembrane region" description="Helical" evidence="1">
    <location>
        <begin position="493"/>
        <end position="513"/>
    </location>
</feature>
<feature type="transmembrane region" description="Helical" evidence="1">
    <location>
        <begin position="533"/>
        <end position="553"/>
    </location>
</feature>
<feature type="domain" description="RCK C-terminal 1" evidence="1">
    <location>
        <begin position="191"/>
        <end position="276"/>
    </location>
</feature>
<feature type="domain" description="RCK C-terminal 2" evidence="1">
    <location>
        <begin position="279"/>
        <end position="361"/>
    </location>
</feature>
<gene>
    <name evidence="1" type="primary">yidE</name>
    <name type="ordered locus">c4604</name>
</gene>
<evidence type="ECO:0000255" key="1">
    <source>
        <dbReference type="HAMAP-Rule" id="MF_01016"/>
    </source>
</evidence>
<evidence type="ECO:0000305" key="2"/>
<reference key="1">
    <citation type="journal article" date="2002" name="Proc. Natl. Acad. Sci. U.S.A.">
        <title>Extensive mosaic structure revealed by the complete genome sequence of uropathogenic Escherichia coli.</title>
        <authorList>
            <person name="Welch R.A."/>
            <person name="Burland V."/>
            <person name="Plunkett G. III"/>
            <person name="Redford P."/>
            <person name="Roesch P."/>
            <person name="Rasko D."/>
            <person name="Buckles E.L."/>
            <person name="Liou S.-R."/>
            <person name="Boutin A."/>
            <person name="Hackett J."/>
            <person name="Stroud D."/>
            <person name="Mayhew G.F."/>
            <person name="Rose D.J."/>
            <person name="Zhou S."/>
            <person name="Schwartz D.C."/>
            <person name="Perna N.T."/>
            <person name="Mobley H.L.T."/>
            <person name="Donnenberg M.S."/>
            <person name="Blattner F.R."/>
        </authorList>
    </citation>
    <scope>NUCLEOTIDE SEQUENCE [LARGE SCALE GENOMIC DNA]</scope>
    <source>
        <strain>CFT073 / ATCC 700928 / UPEC</strain>
    </source>
</reference>
<proteinExistence type="inferred from homology"/>
<keyword id="KW-1003">Cell membrane</keyword>
<keyword id="KW-0472">Membrane</keyword>
<keyword id="KW-1185">Reference proteome</keyword>
<keyword id="KW-0677">Repeat</keyword>
<keyword id="KW-0812">Transmembrane</keyword>
<keyword id="KW-1133">Transmembrane helix</keyword>
<keyword id="KW-0813">Transport</keyword>
<organism>
    <name type="scientific">Escherichia coli O6:H1 (strain CFT073 / ATCC 700928 / UPEC)</name>
    <dbReference type="NCBI Taxonomy" id="199310"/>
    <lineage>
        <taxon>Bacteria</taxon>
        <taxon>Pseudomonadati</taxon>
        <taxon>Pseudomonadota</taxon>
        <taxon>Gammaproteobacteria</taxon>
        <taxon>Enterobacterales</taxon>
        <taxon>Enterobacteriaceae</taxon>
        <taxon>Escherichia</taxon>
    </lineage>
</organism>
<dbReference type="EMBL" id="AE014075">
    <property type="protein sequence ID" value="AAN83039.1"/>
    <property type="status" value="ALT_INIT"/>
    <property type="molecule type" value="Genomic_DNA"/>
</dbReference>
<dbReference type="RefSeq" id="WP_001279773.1">
    <property type="nucleotide sequence ID" value="NZ_CP051263.1"/>
</dbReference>
<dbReference type="SMR" id="Q8FBW6"/>
<dbReference type="STRING" id="199310.c4604"/>
<dbReference type="KEGG" id="ecc:c4604"/>
<dbReference type="eggNOG" id="COG0569">
    <property type="taxonomic scope" value="Bacteria"/>
</dbReference>
<dbReference type="eggNOG" id="COG2985">
    <property type="taxonomic scope" value="Bacteria"/>
</dbReference>
<dbReference type="HOGENOM" id="CLU_035023_3_1_6"/>
<dbReference type="Proteomes" id="UP000001410">
    <property type="component" value="Chromosome"/>
</dbReference>
<dbReference type="GO" id="GO:0005886">
    <property type="term" value="C:plasma membrane"/>
    <property type="evidence" value="ECO:0007669"/>
    <property type="project" value="UniProtKB-SubCell"/>
</dbReference>
<dbReference type="GO" id="GO:0008324">
    <property type="term" value="F:monoatomic cation transmembrane transporter activity"/>
    <property type="evidence" value="ECO:0007669"/>
    <property type="project" value="InterPro"/>
</dbReference>
<dbReference type="GO" id="GO:0006813">
    <property type="term" value="P:potassium ion transport"/>
    <property type="evidence" value="ECO:0007669"/>
    <property type="project" value="InterPro"/>
</dbReference>
<dbReference type="FunFam" id="3.30.70.1450:FF:000004">
    <property type="entry name" value="Putative transport protein YidE"/>
    <property type="match status" value="1"/>
</dbReference>
<dbReference type="Gene3D" id="3.30.70.1450">
    <property type="entry name" value="Regulator of K+ conductance, C-terminal domain"/>
    <property type="match status" value="2"/>
</dbReference>
<dbReference type="HAMAP" id="MF_01016">
    <property type="entry name" value="YidE"/>
    <property type="match status" value="1"/>
</dbReference>
<dbReference type="InterPro" id="IPR050144">
    <property type="entry name" value="AAE_transporter"/>
</dbReference>
<dbReference type="InterPro" id="IPR006037">
    <property type="entry name" value="RCK_C"/>
</dbReference>
<dbReference type="InterPro" id="IPR036721">
    <property type="entry name" value="RCK_C_sf"/>
</dbReference>
<dbReference type="InterPro" id="IPR023018">
    <property type="entry name" value="Transpt_YidE_put"/>
</dbReference>
<dbReference type="InterPro" id="IPR006512">
    <property type="entry name" value="YidE_YbjL"/>
</dbReference>
<dbReference type="NCBIfam" id="NF003007">
    <property type="entry name" value="PRK03818.1"/>
    <property type="match status" value="1"/>
</dbReference>
<dbReference type="NCBIfam" id="TIGR01625">
    <property type="entry name" value="YidE_YbjL_dupl"/>
    <property type="match status" value="2"/>
</dbReference>
<dbReference type="PANTHER" id="PTHR30445">
    <property type="entry name" value="K(+)_H(+) ANTIPORTER SUBUNIT KHTT"/>
    <property type="match status" value="1"/>
</dbReference>
<dbReference type="PANTHER" id="PTHR30445:SF3">
    <property type="entry name" value="TRANSPORT PROTEIN YIDE-RELATED"/>
    <property type="match status" value="1"/>
</dbReference>
<dbReference type="Pfam" id="PF06826">
    <property type="entry name" value="Asp-Al_Ex"/>
    <property type="match status" value="2"/>
</dbReference>
<dbReference type="Pfam" id="PF02080">
    <property type="entry name" value="TrkA_C"/>
    <property type="match status" value="2"/>
</dbReference>
<dbReference type="SUPFAM" id="SSF116726">
    <property type="entry name" value="TrkA C-terminal domain-like"/>
    <property type="match status" value="2"/>
</dbReference>
<dbReference type="PROSITE" id="PS51202">
    <property type="entry name" value="RCK_C"/>
    <property type="match status" value="2"/>
</dbReference>
<comment type="subcellular location">
    <subcellularLocation>
        <location evidence="1">Cell membrane</location>
        <topology evidence="1">Multi-pass membrane protein</topology>
    </subcellularLocation>
</comment>
<comment type="similarity">
    <text evidence="1">Belongs to the AAE transporter (TC 2.A.81) family. YidE subfamily.</text>
</comment>
<comment type="sequence caution" evidence="2">
    <conflict type="erroneous initiation">
        <sequence resource="EMBL-CDS" id="AAN83039"/>
    </conflict>
</comment>
<accession>Q8FBW6</accession>
<sequence>MSDIALTVSILALVAVVGLFIGNVKFRGVGLGIGGVLFGGIIVGHFVSQAGMTLSSDMLHVIQEFGLILFVYTIGIQVGPGFFASLRVSGLRLNLFAVLIVIIGGLVTAILHKLFDIPLPVVLGIFSGAVTNTPALGAGQQILRDLGTPMAMVDQMGMSYAMAYPFGICGILFTMWMLRVIFRVNVETEAQQHESTRTNGGALIRTINIRVENPNLHNLAIKDVPILNGDKVICSRLKREETLKVPSPETVIQLGDLLHLVGQPADLHNAQLVIGQEVDTSLSTKGTDLRVARVVVTNENVLGKRIRDLHFKERYDVVISRLNRAGVELVASSDISLQFGDILNLVGRPSAIDAVANVLGNAQQKLQQVQMLPVFIGIGLGVLLGSIPVFVPGFPAALKLGLAGGPLIMALILGRIGSIGKLYWFMPPSANLALRELGIVLFLSVVGLKSGGDFIHTLVDGEGLSWIGYGALITAVPLITVGILARMLAKMNYLTMCGMLAGSMTDPPALAFANNLHPTSGAAALSYATVYPLVMFLRIITPQLLAVLFWSIG</sequence>